<dbReference type="EMBL" id="M92340">
    <property type="status" value="NOT_ANNOTATED_CDS"/>
    <property type="molecule type" value="mRNA"/>
</dbReference>
<dbReference type="PIR" id="A44257">
    <property type="entry name" value="A44257"/>
</dbReference>
<dbReference type="SMR" id="P40190"/>
<dbReference type="FunCoup" id="P40190">
    <property type="interactions" value="1223"/>
</dbReference>
<dbReference type="STRING" id="10116.ENSRNOP00000018877"/>
<dbReference type="GlyCosmos" id="P40190">
    <property type="glycosylation" value="11 sites, No reported glycans"/>
</dbReference>
<dbReference type="GlyGen" id="P40190">
    <property type="glycosylation" value="11 sites"/>
</dbReference>
<dbReference type="iPTMnet" id="P40190"/>
<dbReference type="PhosphoSitePlus" id="P40190"/>
<dbReference type="SwissPalm" id="P40190"/>
<dbReference type="PaxDb" id="10116-ENSRNOP00000018877"/>
<dbReference type="AGR" id="RGD:2903"/>
<dbReference type="RGD" id="2903">
    <property type="gene designation" value="Il6st"/>
</dbReference>
<dbReference type="eggNOG" id="ENOG502QXEG">
    <property type="taxonomic scope" value="Eukaryota"/>
</dbReference>
<dbReference type="InParanoid" id="P40190"/>
<dbReference type="Reactome" id="R-RNO-1059683">
    <property type="pathway name" value="Interleukin-6 signaling"/>
</dbReference>
<dbReference type="Reactome" id="R-RNO-110056">
    <property type="pathway name" value="MAPK3 (ERK1) activation"/>
</dbReference>
<dbReference type="Reactome" id="R-RNO-112411">
    <property type="pathway name" value="MAPK1 (ERK2) activation"/>
</dbReference>
<dbReference type="Reactome" id="R-RNO-6788467">
    <property type="pathway name" value="IL-6-type cytokine receptor ligand interactions"/>
</dbReference>
<dbReference type="Reactome" id="R-RNO-8984722">
    <property type="pathway name" value="Interleukin-35 Signalling"/>
</dbReference>
<dbReference type="Reactome" id="R-RNO-9020956">
    <property type="pathway name" value="Interleukin-27 signaling"/>
</dbReference>
<dbReference type="PRO" id="PR:P40190"/>
<dbReference type="Proteomes" id="UP000002494">
    <property type="component" value="Unplaced"/>
</dbReference>
<dbReference type="GO" id="GO:0044297">
    <property type="term" value="C:cell body"/>
    <property type="evidence" value="ECO:0000266"/>
    <property type="project" value="RGD"/>
</dbReference>
<dbReference type="GO" id="GO:0070110">
    <property type="term" value="C:ciliary neurotrophic factor receptor complex"/>
    <property type="evidence" value="ECO:0000266"/>
    <property type="project" value="RGD"/>
</dbReference>
<dbReference type="GO" id="GO:0030425">
    <property type="term" value="C:dendrite"/>
    <property type="evidence" value="ECO:0000266"/>
    <property type="project" value="RGD"/>
</dbReference>
<dbReference type="GO" id="GO:0009897">
    <property type="term" value="C:external side of plasma membrane"/>
    <property type="evidence" value="ECO:0000266"/>
    <property type="project" value="RGD"/>
</dbReference>
<dbReference type="GO" id="GO:0005896">
    <property type="term" value="C:interleukin-6 receptor complex"/>
    <property type="evidence" value="ECO:0000266"/>
    <property type="project" value="RGD"/>
</dbReference>
<dbReference type="GO" id="GO:0045121">
    <property type="term" value="C:membrane raft"/>
    <property type="evidence" value="ECO:0000266"/>
    <property type="project" value="RGD"/>
</dbReference>
<dbReference type="GO" id="GO:0043025">
    <property type="term" value="C:neuronal cell body"/>
    <property type="evidence" value="ECO:0000266"/>
    <property type="project" value="RGD"/>
</dbReference>
<dbReference type="GO" id="GO:0032809">
    <property type="term" value="C:neuronal cell body membrane"/>
    <property type="evidence" value="ECO:0000314"/>
    <property type="project" value="RGD"/>
</dbReference>
<dbReference type="GO" id="GO:0005900">
    <property type="term" value="C:oncostatin-M receptor complex"/>
    <property type="evidence" value="ECO:0000266"/>
    <property type="project" value="RGD"/>
</dbReference>
<dbReference type="GO" id="GO:0005886">
    <property type="term" value="C:plasma membrane"/>
    <property type="evidence" value="ECO:0000266"/>
    <property type="project" value="RGD"/>
</dbReference>
<dbReference type="GO" id="GO:0043235">
    <property type="term" value="C:receptor complex"/>
    <property type="evidence" value="ECO:0000318"/>
    <property type="project" value="GO_Central"/>
</dbReference>
<dbReference type="GO" id="GO:0004897">
    <property type="term" value="F:ciliary neurotrophic factor receptor activity"/>
    <property type="evidence" value="ECO:0000266"/>
    <property type="project" value="RGD"/>
</dbReference>
<dbReference type="GO" id="GO:0005127">
    <property type="term" value="F:ciliary neurotrophic factor receptor binding"/>
    <property type="evidence" value="ECO:0000266"/>
    <property type="project" value="RGD"/>
</dbReference>
<dbReference type="GO" id="GO:0015026">
    <property type="term" value="F:coreceptor activity"/>
    <property type="evidence" value="ECO:0000266"/>
    <property type="project" value="RGD"/>
</dbReference>
<dbReference type="GO" id="GO:0019955">
    <property type="term" value="F:cytokine binding"/>
    <property type="evidence" value="ECO:0000318"/>
    <property type="project" value="GO_Central"/>
</dbReference>
<dbReference type="GO" id="GO:0004896">
    <property type="term" value="F:cytokine receptor activity"/>
    <property type="evidence" value="ECO:0000318"/>
    <property type="project" value="GO_Central"/>
</dbReference>
<dbReference type="GO" id="GO:0019838">
    <property type="term" value="F:growth factor binding"/>
    <property type="evidence" value="ECO:0000266"/>
    <property type="project" value="RGD"/>
</dbReference>
<dbReference type="GO" id="GO:0042802">
    <property type="term" value="F:identical protein binding"/>
    <property type="evidence" value="ECO:0000266"/>
    <property type="project" value="RGD"/>
</dbReference>
<dbReference type="GO" id="GO:0045509">
    <property type="term" value="F:interleukin-27 receptor activity"/>
    <property type="evidence" value="ECO:0000266"/>
    <property type="project" value="RGD"/>
</dbReference>
<dbReference type="GO" id="GO:0030296">
    <property type="term" value="F:protein tyrosine kinase activator activity"/>
    <property type="evidence" value="ECO:0000266"/>
    <property type="project" value="RGD"/>
</dbReference>
<dbReference type="GO" id="GO:0097110">
    <property type="term" value="F:scaffold protein binding"/>
    <property type="evidence" value="ECO:0000266"/>
    <property type="project" value="RGD"/>
</dbReference>
<dbReference type="GO" id="GO:0097696">
    <property type="term" value="P:cell surface receptor signaling pathway via STAT"/>
    <property type="evidence" value="ECO:0000266"/>
    <property type="project" value="RGD"/>
</dbReference>
<dbReference type="GO" id="GO:0070120">
    <property type="term" value="P:ciliary neurotrophic factor-mediated signaling pathway"/>
    <property type="evidence" value="ECO:0000266"/>
    <property type="project" value="RGD"/>
</dbReference>
<dbReference type="GO" id="GO:0019221">
    <property type="term" value="P:cytokine-mediated signaling pathway"/>
    <property type="evidence" value="ECO:0000266"/>
    <property type="project" value="RGD"/>
</dbReference>
<dbReference type="GO" id="GO:0005977">
    <property type="term" value="P:glycogen metabolic process"/>
    <property type="evidence" value="ECO:0000266"/>
    <property type="project" value="RGD"/>
</dbReference>
<dbReference type="GO" id="GO:0038154">
    <property type="term" value="P:interleukin-11-mediated signaling pathway"/>
    <property type="evidence" value="ECO:0000266"/>
    <property type="project" value="RGD"/>
</dbReference>
<dbReference type="GO" id="GO:0070106">
    <property type="term" value="P:interleukin-27-mediated signaling pathway"/>
    <property type="evidence" value="ECO:0000266"/>
    <property type="project" value="RGD"/>
</dbReference>
<dbReference type="GO" id="GO:0070102">
    <property type="term" value="P:interleukin-6-mediated signaling pathway"/>
    <property type="evidence" value="ECO:0000315"/>
    <property type="project" value="RGD"/>
</dbReference>
<dbReference type="GO" id="GO:0060576">
    <property type="term" value="P:intestinal epithelial cell development"/>
    <property type="evidence" value="ECO:0000266"/>
    <property type="project" value="RGD"/>
</dbReference>
<dbReference type="GO" id="GO:0048861">
    <property type="term" value="P:leukemia inhibitory factor signaling pathway"/>
    <property type="evidence" value="ECO:0000266"/>
    <property type="project" value="RGD"/>
</dbReference>
<dbReference type="GO" id="GO:0051481">
    <property type="term" value="P:negative regulation of cytosolic calcium ion concentration"/>
    <property type="evidence" value="ECO:0000315"/>
    <property type="project" value="RGD"/>
</dbReference>
<dbReference type="GO" id="GO:0043524">
    <property type="term" value="P:negative regulation of neuron apoptotic process"/>
    <property type="evidence" value="ECO:0000266"/>
    <property type="project" value="RGD"/>
</dbReference>
<dbReference type="GO" id="GO:0038165">
    <property type="term" value="P:oncostatin-M-mediated signaling pathway"/>
    <property type="evidence" value="ECO:0000266"/>
    <property type="project" value="RGD"/>
</dbReference>
<dbReference type="GO" id="GO:0002821">
    <property type="term" value="P:positive regulation of adaptive immune response"/>
    <property type="evidence" value="ECO:0000266"/>
    <property type="project" value="RGD"/>
</dbReference>
<dbReference type="GO" id="GO:0048711">
    <property type="term" value="P:positive regulation of astrocyte differentiation"/>
    <property type="evidence" value="ECO:0000266"/>
    <property type="project" value="RGD"/>
</dbReference>
<dbReference type="GO" id="GO:0008284">
    <property type="term" value="P:positive regulation of cell population proliferation"/>
    <property type="evidence" value="ECO:0000266"/>
    <property type="project" value="RGD"/>
</dbReference>
<dbReference type="GO" id="GO:0045747">
    <property type="term" value="P:positive regulation of Notch signaling pathway"/>
    <property type="evidence" value="ECO:0000266"/>
    <property type="project" value="RGD"/>
</dbReference>
<dbReference type="GO" id="GO:0045669">
    <property type="term" value="P:positive regulation of osteoblast differentiation"/>
    <property type="evidence" value="ECO:0000266"/>
    <property type="project" value="RGD"/>
</dbReference>
<dbReference type="GO" id="GO:0014911">
    <property type="term" value="P:positive regulation of smooth muscle cell migration"/>
    <property type="evidence" value="ECO:0000315"/>
    <property type="project" value="RGD"/>
</dbReference>
<dbReference type="GO" id="GO:0042102">
    <property type="term" value="P:positive regulation of T cell proliferation"/>
    <property type="evidence" value="ECO:0000266"/>
    <property type="project" value="RGD"/>
</dbReference>
<dbReference type="GO" id="GO:0008593">
    <property type="term" value="P:regulation of Notch signaling pathway"/>
    <property type="evidence" value="ECO:0000266"/>
    <property type="project" value="RGD"/>
</dbReference>
<dbReference type="GO" id="GO:0034097">
    <property type="term" value="P:response to cytokine"/>
    <property type="evidence" value="ECO:0000266"/>
    <property type="project" value="RGD"/>
</dbReference>
<dbReference type="GO" id="GO:0007584">
    <property type="term" value="P:response to nutrient"/>
    <property type="evidence" value="ECO:0000270"/>
    <property type="project" value="RGD"/>
</dbReference>
<dbReference type="GO" id="GO:0007165">
    <property type="term" value="P:signal transduction"/>
    <property type="evidence" value="ECO:0000266"/>
    <property type="project" value="RGD"/>
</dbReference>
<dbReference type="GO" id="GO:0006642">
    <property type="term" value="P:triglyceride mobilization"/>
    <property type="evidence" value="ECO:0000315"/>
    <property type="project" value="RGD"/>
</dbReference>
<dbReference type="CDD" id="cd00063">
    <property type="entry name" value="FN3"/>
    <property type="match status" value="3"/>
</dbReference>
<dbReference type="FunFam" id="2.60.40.10:FF:000281">
    <property type="entry name" value="Cytokine receptor like factor 1"/>
    <property type="match status" value="1"/>
</dbReference>
<dbReference type="FunFam" id="2.60.40.10:FF:000414">
    <property type="entry name" value="Interleukin-6 receptor subunit beta"/>
    <property type="match status" value="1"/>
</dbReference>
<dbReference type="FunFam" id="2.60.40.10:FF:000524">
    <property type="entry name" value="Interleukin-6 receptor subunit beta"/>
    <property type="match status" value="1"/>
</dbReference>
<dbReference type="FunFam" id="2.60.40.10:FF:000542">
    <property type="entry name" value="Interleukin-6 receptor subunit beta"/>
    <property type="match status" value="1"/>
</dbReference>
<dbReference type="FunFam" id="2.60.40.10:FF:000855">
    <property type="entry name" value="Interleukin-6 receptor subunit beta"/>
    <property type="match status" value="1"/>
</dbReference>
<dbReference type="FunFam" id="2.60.40.10:FF:000563">
    <property type="entry name" value="interleukin-6 receptor subunit beta"/>
    <property type="match status" value="1"/>
</dbReference>
<dbReference type="Gene3D" id="2.60.40.10">
    <property type="entry name" value="Immunoglobulins"/>
    <property type="match status" value="6"/>
</dbReference>
<dbReference type="InterPro" id="IPR003961">
    <property type="entry name" value="FN3_dom"/>
</dbReference>
<dbReference type="InterPro" id="IPR036116">
    <property type="entry name" value="FN3_sf"/>
</dbReference>
<dbReference type="InterPro" id="IPR003529">
    <property type="entry name" value="Hematopoietin_rcpt_Gp130_CS"/>
</dbReference>
<dbReference type="InterPro" id="IPR013783">
    <property type="entry name" value="Ig-like_fold"/>
</dbReference>
<dbReference type="InterPro" id="IPR010457">
    <property type="entry name" value="IgC2-like_lig-bd"/>
</dbReference>
<dbReference type="InterPro" id="IPR050379">
    <property type="entry name" value="Type-I_Cytokine_Rcpt"/>
</dbReference>
<dbReference type="PANTHER" id="PTHR23036">
    <property type="entry name" value="CYTOKINE RECEPTOR"/>
    <property type="match status" value="1"/>
</dbReference>
<dbReference type="PANTHER" id="PTHR23036:SF151">
    <property type="entry name" value="FIBRONECTIN TYPE-III DOMAIN-CONTAINING PROTEIN"/>
    <property type="match status" value="1"/>
</dbReference>
<dbReference type="Pfam" id="PF00041">
    <property type="entry name" value="fn3"/>
    <property type="match status" value="2"/>
</dbReference>
<dbReference type="Pfam" id="PF06328">
    <property type="entry name" value="Lep_receptor_Ig"/>
    <property type="match status" value="1"/>
</dbReference>
<dbReference type="SMART" id="SM00060">
    <property type="entry name" value="FN3"/>
    <property type="match status" value="4"/>
</dbReference>
<dbReference type="SUPFAM" id="SSF49265">
    <property type="entry name" value="Fibronectin type III"/>
    <property type="match status" value="5"/>
</dbReference>
<dbReference type="PROSITE" id="PS50853">
    <property type="entry name" value="FN3"/>
    <property type="match status" value="4"/>
</dbReference>
<dbReference type="PROSITE" id="PS01353">
    <property type="entry name" value="HEMATOPO_REC_L_F2"/>
    <property type="match status" value="1"/>
</dbReference>
<sequence length="918" mass="102450">MSALRIWLMQALLIFLTTESIGQLVEPCGYIYPEFPVVQRGSNFTATCVLKEKCLQVYSVNATYIVWKTNHVAVPKEQVTVINRTASSVTFTDVVFQNVQLTCNILSFGQIEQNVYGITILSGYPPDIPTNLSCIVNEGKNMLCQLDPGRETYLETNYTLKSEWATEKFPDCRTKHGTSSCMMGYTPIYFVNIEVWVEAENALGNVSSEPINFDPVDKVKPSPPHNLSVTNSEELSSILKLAWVNSGLDSILRLKSDIQYRTKDASTWIQVPLEDTVSPRTSFTVQDLKPFTEYVFRIRSIKENGKGYWSDWSEEASGTTYEDRPSKAPSFWYKVNANHPQEYRSARLIWKTLPLSEANGKILDYEVVLTQSKSVSQTYTVNGTELIVNLTNNRYVASLAARNVVGKSPATVLTIPGSHFKASHPVVDLKAFPKDNLLWVEWTPPSKPVNKYILEWCVLSENSPCIPDWQQEDGTVNRTHLRGSLLESKCYLITVTPVFPGGPGSPESMKAYLKQAAPSKGPTVRTKKVGKNEAVLEWDHLPVDVQNGFIRNYSISYRTSVGKEMVVRVDSSHTEYTLSSLSSDTLYMVHMAAYTEEGGKDGPEFTFTTLKFAQGEIEAIVVPVCLAFLLTTLLGVLFCFNKRDLIKKHIWPNVPDPSKSHIAQWSPHTPPRHNFNSKDQMYSDANFTDVSVVEIEANNKKPCPDDLKSLDLFKKEKISTEGHSSGIGGSSCMSSSRPSISSSEENESAQSTASTVQYSTVVHSGYRHQVPSVQVFSRSESTQPLLDSEERPEDLQLVDSVDSGDEILPRQQYFKQSCSQPGASPDVSHFGRSSQVPSGSEEDFVRLKQQQVSDHISEPYGSEQRRLFQEGSVADALGTGTDGQIERFESVGMETAMDEDISKSYLPQTVRQGGYMPQ</sequence>
<name>IL6RB_RAT</name>
<feature type="signal peptide" evidence="3">
    <location>
        <begin position="1"/>
        <end position="22"/>
    </location>
</feature>
<feature type="chain" id="PRO_0000010901" description="Interleukin-6 receptor subunit beta">
    <location>
        <begin position="23"/>
        <end position="918"/>
    </location>
</feature>
<feature type="topological domain" description="Extracellular" evidence="3">
    <location>
        <begin position="23"/>
        <end position="618"/>
    </location>
</feature>
<feature type="transmembrane region" description="Helical" evidence="3">
    <location>
        <begin position="619"/>
        <end position="640"/>
    </location>
</feature>
<feature type="topological domain" description="Cytoplasmic" evidence="3">
    <location>
        <begin position="641"/>
        <end position="918"/>
    </location>
</feature>
<feature type="domain" description="Ig-like C2-type">
    <location>
        <begin position="26"/>
        <end position="120"/>
    </location>
</feature>
<feature type="domain" description="Fibronectin type-III 1" evidence="4">
    <location>
        <begin position="125"/>
        <end position="215"/>
    </location>
</feature>
<feature type="domain" description="Fibronectin type-III 2" evidence="4">
    <location>
        <begin position="223"/>
        <end position="323"/>
    </location>
</feature>
<feature type="domain" description="Fibronectin type-III 3" evidence="4">
    <location>
        <begin position="328"/>
        <end position="418"/>
    </location>
</feature>
<feature type="domain" description="Fibronectin type-III 4" evidence="4">
    <location>
        <begin position="422"/>
        <end position="516"/>
    </location>
</feature>
<feature type="domain" description="Fibronectin type-III 5" evidence="4">
    <location>
        <begin position="518"/>
        <end position="612"/>
    </location>
</feature>
<feature type="region of interest" description="Disordered" evidence="5">
    <location>
        <begin position="659"/>
        <end position="679"/>
    </location>
</feature>
<feature type="region of interest" description="Disordered" evidence="5">
    <location>
        <begin position="720"/>
        <end position="754"/>
    </location>
</feature>
<feature type="region of interest" description="Disordered" evidence="5">
    <location>
        <begin position="773"/>
        <end position="795"/>
    </location>
</feature>
<feature type="region of interest" description="Disordered" evidence="5">
    <location>
        <begin position="817"/>
        <end position="842"/>
    </location>
</feature>
<feature type="short sequence motif" description="WSXWS motif">
    <location>
        <begin position="309"/>
        <end position="313"/>
    </location>
</feature>
<feature type="short sequence motif" description="Box 1 motif">
    <location>
        <begin position="650"/>
        <end position="658"/>
    </location>
</feature>
<feature type="compositionally biased region" description="Low complexity" evidence="5">
    <location>
        <begin position="730"/>
        <end position="751"/>
    </location>
</feature>
<feature type="compositionally biased region" description="Polar residues" evidence="5">
    <location>
        <begin position="773"/>
        <end position="785"/>
    </location>
</feature>
<feature type="modified residue" description="Phosphoserine" evidence="1">
    <location>
        <position position="660"/>
    </location>
</feature>
<feature type="modified residue" description="Phosphoserine" evidence="1">
    <location>
        <position position="666"/>
    </location>
</feature>
<feature type="modified residue" description="Phosphoserine" evidence="1">
    <location>
        <position position="781"/>
    </location>
</feature>
<feature type="modified residue" description="Phosphoserine" evidence="2">
    <location>
        <position position="788"/>
    </location>
</feature>
<feature type="modified residue" description="Phosphoserine" evidence="1">
    <location>
        <position position="828"/>
    </location>
</feature>
<feature type="modified residue" description="Phosphoserine" evidence="9">
    <location>
        <position position="838"/>
    </location>
</feature>
<feature type="glycosylation site" description="N-linked (GlcNAc...) asparagine" evidence="3">
    <location>
        <position position="43"/>
    </location>
</feature>
<feature type="glycosylation site" description="N-linked (GlcNAc...) asparagine" evidence="3">
    <location>
        <position position="61"/>
    </location>
</feature>
<feature type="glycosylation site" description="N-linked (GlcNAc...) asparagine" evidence="3">
    <location>
        <position position="83"/>
    </location>
</feature>
<feature type="glycosylation site" description="N-linked (GlcNAc...) asparagine" evidence="3">
    <location>
        <position position="131"/>
    </location>
</feature>
<feature type="glycosylation site" description="N-linked (GlcNAc...) asparagine" evidence="3">
    <location>
        <position position="157"/>
    </location>
</feature>
<feature type="glycosylation site" description="N-linked (GlcNAc...) asparagine" evidence="3">
    <location>
        <position position="205"/>
    </location>
</feature>
<feature type="glycosylation site" description="N-linked (GlcNAc...) asparagine" evidence="3">
    <location>
        <position position="226"/>
    </location>
</feature>
<feature type="glycosylation site" description="N-linked (GlcNAc...) asparagine" evidence="3">
    <location>
        <position position="382"/>
    </location>
</feature>
<feature type="glycosylation site" description="N-linked (GlcNAc...) asparagine" evidence="3">
    <location>
        <position position="389"/>
    </location>
</feature>
<feature type="glycosylation site" description="N-linked (GlcNAc...) asparagine" evidence="3">
    <location>
        <position position="477"/>
    </location>
</feature>
<feature type="glycosylation site" description="N-linked (GlcNAc...) asparagine" evidence="3">
    <location>
        <position position="552"/>
    </location>
</feature>
<feature type="disulfide bond" evidence="1">
    <location>
        <begin position="28"/>
        <end position="54"/>
    </location>
</feature>
<feature type="disulfide bond" evidence="1">
    <location>
        <begin position="48"/>
        <end position="103"/>
    </location>
</feature>
<feature type="disulfide bond" evidence="1">
    <location>
        <begin position="134"/>
        <end position="144"/>
    </location>
</feature>
<feature type="disulfide bond" evidence="1">
    <location>
        <begin position="172"/>
        <end position="181"/>
    </location>
</feature>
<feature type="disulfide bond" evidence="1">
    <location>
        <begin position="457"/>
        <end position="465"/>
    </location>
</feature>
<organism>
    <name type="scientific">Rattus norvegicus</name>
    <name type="common">Rat</name>
    <dbReference type="NCBI Taxonomy" id="10116"/>
    <lineage>
        <taxon>Eukaryota</taxon>
        <taxon>Metazoa</taxon>
        <taxon>Chordata</taxon>
        <taxon>Craniata</taxon>
        <taxon>Vertebrata</taxon>
        <taxon>Euteleostomi</taxon>
        <taxon>Mammalia</taxon>
        <taxon>Eutheria</taxon>
        <taxon>Euarchontoglires</taxon>
        <taxon>Glires</taxon>
        <taxon>Rodentia</taxon>
        <taxon>Myomorpha</taxon>
        <taxon>Muroidea</taxon>
        <taxon>Muridae</taxon>
        <taxon>Murinae</taxon>
        <taxon>Rattus</taxon>
    </lineage>
</organism>
<protein>
    <recommendedName>
        <fullName evidence="7">Interleukin-6 receptor subunit beta</fullName>
        <shortName>IL-6 receptor subunit beta</shortName>
        <shortName>IL-6R subunit beta</shortName>
        <shortName>IL-6R-beta</shortName>
        <shortName>IL-6RB</shortName>
    </recommendedName>
    <alternativeName>
        <fullName>Interleukin-6 signal transducer</fullName>
    </alternativeName>
    <alternativeName>
        <fullName>Membrane glycoprotein 130</fullName>
        <shortName>gp130</shortName>
    </alternativeName>
    <alternativeName>
        <fullName>Oncostatin-M receptor subunit alpha</fullName>
    </alternativeName>
    <cdAntigenName>CD130</cdAntigenName>
</protein>
<comment type="function">
    <text evidence="1 2">Signal-transducing molecule. The receptor systems for IL6, LIF, OSM, CNTF, IL11, CTF1 and BSF3 can utilize IL6ST for initiating signal transmission. Binding of IL6 to IL6R induces IL6ST homodimerization and formation of a high-affinity receptor complex, which activates the intracellular JAK-MAPK and JAK-STAT3 signaling pathways. That causes phosphorylation of IL6ST tyrosine residues which in turn activates STAT3 (By similarity). In parallel, the IL6 signaling pathway induces the expression of two cytokine receptor signaling inhibitors, SOCS1 and SOCS3, which inhibit JAK and terminate the activity of the IL6 signaling pathway as a negative feedback loop. Also activates the yes-associated protein 1 (YAP) and NOTCH pathways to control inflammation-induced epithelial regeneration, independently of STAT3 (By similarity). Mediates signals which regulate immune response, hematopoiesis, pain control and bone metabolism (By similarity). Has a role in embryonic development (By similarity). Essential for survival of motor and sensory neurons and for differentiation of astrocytes (By similarity). Required for expression of TRPA1 in nociceptive neurons (By similarity). Required for the maintenance of PTH1R expression in the osteoblast lineage and for the stimulation of PTH-induced osteoblast differentiation (By similarity). Required for normal trabecular bone mass and cortical bone composition (By similarity).</text>
</comment>
<comment type="subunit">
    <text evidence="1 2">Component of a hexamer of two molecules each of IL6, IL6R and IL6ST; associates with the complex IL6:IL6R but does not interact with IL6 (By similarity). Forms heterodimers composed of LIFR and IL6ST (type I OSM receptor) which are activated by LIF and OSM. Also forms heterodimers composed of OSMR and IL6ST (type II receptor) which are activated by OSM but not by LIF. Interacts with HCK (By similarity). Interacts with INPP5D/SHIP1 (By similarity). Interacts with SRC and YES (By similarity). Interacts with ARMH4; this interaction prevents IL6ST protein homodimerization and bridges ARMH4 with IL6R and STAT3 and therefore inhibits phosphorylation of STAT3 at 'Tyr-705' (By similarity).</text>
</comment>
<comment type="subcellular location">
    <subcellularLocation>
        <location evidence="1">Cell membrane</location>
        <topology evidence="3">Single-pass type I membrane protein</topology>
    </subcellularLocation>
</comment>
<comment type="tissue specificity">
    <text evidence="6">Found in hepatocytes, astrocytes, fibroblasts and endothelial cells.</text>
</comment>
<comment type="domain">
    <text>The WSXWS motif appears to be necessary for proper protein folding and thereby efficient intracellular transport and cell-surface receptor binding.</text>
</comment>
<comment type="domain">
    <text>The box 1 motif is required for JAK interaction and/or activation.</text>
</comment>
<comment type="PTM">
    <text evidence="1">Phosphorylation of Ser-781 down-regulates cell surface expression.</text>
</comment>
<comment type="PTM">
    <text evidence="1">Heavily N-glycosylated. Glycosylation is required for protein stability and localization in plasma membrane but not for ligand binding.</text>
</comment>
<comment type="similarity">
    <text evidence="7">Belongs to the type I cytokine receptor family. Type 2 subfamily.</text>
</comment>
<evidence type="ECO:0000250" key="1">
    <source>
        <dbReference type="UniProtKB" id="P40189"/>
    </source>
</evidence>
<evidence type="ECO:0000250" key="2">
    <source>
        <dbReference type="UniProtKB" id="Q00560"/>
    </source>
</evidence>
<evidence type="ECO:0000255" key="3"/>
<evidence type="ECO:0000255" key="4">
    <source>
        <dbReference type="PROSITE-ProRule" id="PRU00316"/>
    </source>
</evidence>
<evidence type="ECO:0000256" key="5">
    <source>
        <dbReference type="SAM" id="MobiDB-lite"/>
    </source>
</evidence>
<evidence type="ECO:0000269" key="6">
    <source>
    </source>
</evidence>
<evidence type="ECO:0000305" key="7"/>
<evidence type="ECO:0000312" key="8">
    <source>
        <dbReference type="RGD" id="2903"/>
    </source>
</evidence>
<evidence type="ECO:0007744" key="9">
    <source>
    </source>
</evidence>
<proteinExistence type="evidence at protein level"/>
<accession>P40190</accession>
<gene>
    <name evidence="8" type="primary">Il6st</name>
</gene>
<reference key="1">
    <citation type="journal article" date="1992" name="Genomics">
        <title>Molecular cloning and characterization of the rat liver IL-6 signal transducing molecule, gp130.</title>
        <authorList>
            <person name="Wang Y."/>
            <person name="Nesbitt J.E."/>
            <person name="Fuentes N.L."/>
            <person name="Fuller G.M."/>
        </authorList>
    </citation>
    <scope>NUCLEOTIDE SEQUENCE [MRNA]</scope>
    <scope>TISSUE SPECIFICITY</scope>
    <source>
        <tissue>Liver</tissue>
    </source>
</reference>
<reference key="2">
    <citation type="journal article" date="2012" name="Nat. Commun.">
        <title>Quantitative maps of protein phosphorylation sites across 14 different rat organs and tissues.</title>
        <authorList>
            <person name="Lundby A."/>
            <person name="Secher A."/>
            <person name="Lage K."/>
            <person name="Nordsborg N.B."/>
            <person name="Dmytriyev A."/>
            <person name="Lundby C."/>
            <person name="Olsen J.V."/>
        </authorList>
    </citation>
    <scope>PHOSPHORYLATION [LARGE SCALE ANALYSIS] AT SER-838</scope>
    <scope>IDENTIFICATION BY MASS SPECTROMETRY [LARGE SCALE ANALYSIS]</scope>
</reference>
<keyword id="KW-1003">Cell membrane</keyword>
<keyword id="KW-1015">Disulfide bond</keyword>
<keyword id="KW-0325">Glycoprotein</keyword>
<keyword id="KW-0393">Immunoglobulin domain</keyword>
<keyword id="KW-0472">Membrane</keyword>
<keyword id="KW-0597">Phosphoprotein</keyword>
<keyword id="KW-0675">Receptor</keyword>
<keyword id="KW-1185">Reference proteome</keyword>
<keyword id="KW-0677">Repeat</keyword>
<keyword id="KW-0732">Signal</keyword>
<keyword id="KW-0812">Transmembrane</keyword>
<keyword id="KW-1133">Transmembrane helix</keyword>